<name>ADIPO_MOUSE</name>
<dbReference type="EMBL" id="U37222">
    <property type="protein sequence ID" value="AAA80543.1"/>
    <property type="molecule type" value="mRNA"/>
</dbReference>
<dbReference type="EMBL" id="U49915">
    <property type="protein sequence ID" value="AAB06706.1"/>
    <property type="molecule type" value="mRNA"/>
</dbReference>
<dbReference type="EMBL" id="AF304466">
    <property type="protein sequence ID" value="AAK13417.1"/>
    <property type="molecule type" value="Genomic_DNA"/>
</dbReference>
<dbReference type="EMBL" id="AY749429">
    <property type="protein sequence ID" value="AAW70555.1"/>
    <property type="molecule type" value="mRNA"/>
</dbReference>
<dbReference type="EMBL" id="AY754346">
    <property type="protein sequence ID" value="AAW82905.1"/>
    <property type="molecule type" value="mRNA"/>
</dbReference>
<dbReference type="EMBL" id="AK003138">
    <property type="protein sequence ID" value="BAB22597.1"/>
    <property type="molecule type" value="mRNA"/>
</dbReference>
<dbReference type="EMBL" id="AK134112">
    <property type="protein sequence ID" value="BAE22019.1"/>
    <property type="molecule type" value="mRNA"/>
</dbReference>
<dbReference type="EMBL" id="AC125396">
    <property type="status" value="NOT_ANNOTATED_CDS"/>
    <property type="molecule type" value="Genomic_DNA"/>
</dbReference>
<dbReference type="EMBL" id="CH466521">
    <property type="protein sequence ID" value="EDK97661.1"/>
    <property type="molecule type" value="Genomic_DNA"/>
</dbReference>
<dbReference type="EMBL" id="BC028770">
    <property type="protein sequence ID" value="AAH28770.1"/>
    <property type="molecule type" value="mRNA"/>
</dbReference>
<dbReference type="CCDS" id="CCDS28075.1"/>
<dbReference type="RefSeq" id="NP_033735.3">
    <property type="nucleotide sequence ID" value="NM_009605.5"/>
</dbReference>
<dbReference type="PDB" id="1C28">
    <property type="method" value="X-ray"/>
    <property type="resolution" value="2.10 A"/>
    <property type="chains" value="A/B/C=114-247"/>
</dbReference>
<dbReference type="PDB" id="1C3H">
    <property type="method" value="X-ray"/>
    <property type="resolution" value="2.10 A"/>
    <property type="chains" value="A/B/C/D/E/F=111-247"/>
</dbReference>
<dbReference type="PDBsum" id="1C28"/>
<dbReference type="PDBsum" id="1C3H"/>
<dbReference type="SMR" id="Q60994"/>
<dbReference type="BioGRID" id="197940">
    <property type="interactions" value="6"/>
</dbReference>
<dbReference type="CORUM" id="Q60994"/>
<dbReference type="DIP" id="DIP-44111N"/>
<dbReference type="FunCoup" id="Q60994">
    <property type="interactions" value="255"/>
</dbReference>
<dbReference type="IntAct" id="Q60994">
    <property type="interactions" value="5"/>
</dbReference>
<dbReference type="MINT" id="Q60994"/>
<dbReference type="STRING" id="10090.ENSMUSP00000023593"/>
<dbReference type="GlyCosmos" id="Q60994">
    <property type="glycosylation" value="6 sites, No reported glycans"/>
</dbReference>
<dbReference type="GlyGen" id="Q60994">
    <property type="glycosylation" value="9 sites, 1 O-linked glycan (1 site)"/>
</dbReference>
<dbReference type="iPTMnet" id="Q60994"/>
<dbReference type="PhosphoSitePlus" id="Q60994"/>
<dbReference type="SwissPalm" id="Q60994"/>
<dbReference type="CPTAC" id="non-CPTAC-3294"/>
<dbReference type="CPTAC" id="non-CPTAC-3335"/>
<dbReference type="CPTAC" id="non-CPTAC-3336"/>
<dbReference type="jPOST" id="Q60994"/>
<dbReference type="PaxDb" id="10090-ENSMUSP00000023593"/>
<dbReference type="PeptideAtlas" id="Q60994"/>
<dbReference type="ProteomicsDB" id="296185"/>
<dbReference type="Antibodypedia" id="19310">
    <property type="antibodies" value="1899 antibodies from 49 providers"/>
</dbReference>
<dbReference type="DNASU" id="11450"/>
<dbReference type="Ensembl" id="ENSMUST00000023593.6">
    <property type="protein sequence ID" value="ENSMUSP00000023593.6"/>
    <property type="gene ID" value="ENSMUSG00000022878.6"/>
</dbReference>
<dbReference type="GeneID" id="11450"/>
<dbReference type="KEGG" id="mmu:11450"/>
<dbReference type="UCSC" id="uc007ytk.1">
    <property type="organism name" value="mouse"/>
</dbReference>
<dbReference type="AGR" id="MGI:106675"/>
<dbReference type="CTD" id="9370"/>
<dbReference type="MGI" id="MGI:106675">
    <property type="gene designation" value="Adipoq"/>
</dbReference>
<dbReference type="VEuPathDB" id="HostDB:ENSMUSG00000022878"/>
<dbReference type="eggNOG" id="ENOG502QRY3">
    <property type="taxonomic scope" value="Eukaryota"/>
</dbReference>
<dbReference type="GeneTree" id="ENSGT00940000159828"/>
<dbReference type="HOGENOM" id="CLU_001074_0_2_1"/>
<dbReference type="InParanoid" id="Q60994"/>
<dbReference type="OMA" id="GTYYFAY"/>
<dbReference type="OrthoDB" id="8044756at2759"/>
<dbReference type="PhylomeDB" id="Q60994"/>
<dbReference type="TreeFam" id="TF329591"/>
<dbReference type="Reactome" id="R-MMU-163680">
    <property type="pathway name" value="AMPK inhibits chREBP transcriptional activation activity"/>
</dbReference>
<dbReference type="BioGRID-ORCS" id="11450">
    <property type="hits" value="1 hit in 79 CRISPR screens"/>
</dbReference>
<dbReference type="EvolutionaryTrace" id="Q60994"/>
<dbReference type="PRO" id="PR:Q60994"/>
<dbReference type="Proteomes" id="UP000000589">
    <property type="component" value="Chromosome 16"/>
</dbReference>
<dbReference type="RNAct" id="Q60994">
    <property type="molecule type" value="protein"/>
</dbReference>
<dbReference type="Bgee" id="ENSMUSG00000022878">
    <property type="expression patterns" value="Expressed in gonadal fat pad and 106 other cell types or tissues"/>
</dbReference>
<dbReference type="ExpressionAtlas" id="Q60994">
    <property type="expression patterns" value="baseline and differential"/>
</dbReference>
<dbReference type="GO" id="GO:0071944">
    <property type="term" value="C:cell periphery"/>
    <property type="evidence" value="ECO:0000250"/>
    <property type="project" value="UniProtKB"/>
</dbReference>
<dbReference type="GO" id="GO:0009986">
    <property type="term" value="C:cell surface"/>
    <property type="evidence" value="ECO:0000250"/>
    <property type="project" value="UniProtKB"/>
</dbReference>
<dbReference type="GO" id="GO:0005581">
    <property type="term" value="C:collagen trimer"/>
    <property type="evidence" value="ECO:0007669"/>
    <property type="project" value="UniProtKB-KW"/>
</dbReference>
<dbReference type="GO" id="GO:0005783">
    <property type="term" value="C:endoplasmic reticulum"/>
    <property type="evidence" value="ECO:0000314"/>
    <property type="project" value="MGI"/>
</dbReference>
<dbReference type="GO" id="GO:0005576">
    <property type="term" value="C:extracellular region"/>
    <property type="evidence" value="ECO:0000304"/>
    <property type="project" value="Reactome"/>
</dbReference>
<dbReference type="GO" id="GO:0005615">
    <property type="term" value="C:extracellular space"/>
    <property type="evidence" value="ECO:0000314"/>
    <property type="project" value="MGI"/>
</dbReference>
<dbReference type="GO" id="GO:0048471">
    <property type="term" value="C:perinuclear region of cytoplasm"/>
    <property type="evidence" value="ECO:0000250"/>
    <property type="project" value="UniProtKB"/>
</dbReference>
<dbReference type="GO" id="GO:0005179">
    <property type="term" value="F:hormone activity"/>
    <property type="evidence" value="ECO:0000314"/>
    <property type="project" value="MGI"/>
</dbReference>
<dbReference type="GO" id="GO:0042802">
    <property type="term" value="F:identical protein binding"/>
    <property type="evidence" value="ECO:0000353"/>
    <property type="project" value="IntAct"/>
</dbReference>
<dbReference type="GO" id="GO:0042803">
    <property type="term" value="F:protein homodimerization activity"/>
    <property type="evidence" value="ECO:0007669"/>
    <property type="project" value="Ensembl"/>
</dbReference>
<dbReference type="GO" id="GO:0043539">
    <property type="term" value="F:protein serine/threonine kinase activator activity"/>
    <property type="evidence" value="ECO:0000314"/>
    <property type="project" value="MGI"/>
</dbReference>
<dbReference type="GO" id="GO:0033691">
    <property type="term" value="F:sialic acid binding"/>
    <property type="evidence" value="ECO:0007669"/>
    <property type="project" value="Ensembl"/>
</dbReference>
<dbReference type="GO" id="GO:0005102">
    <property type="term" value="F:signaling receptor binding"/>
    <property type="evidence" value="ECO:0000314"/>
    <property type="project" value="MGI"/>
</dbReference>
<dbReference type="GO" id="GO:0033211">
    <property type="term" value="P:adiponectin-activated signaling pathway"/>
    <property type="evidence" value="ECO:0007669"/>
    <property type="project" value="Ensembl"/>
</dbReference>
<dbReference type="GO" id="GO:0050873">
    <property type="term" value="P:brown fat cell differentiation"/>
    <property type="evidence" value="ECO:0000314"/>
    <property type="project" value="MGI"/>
</dbReference>
<dbReference type="GO" id="GO:0032869">
    <property type="term" value="P:cellular response to insulin stimulus"/>
    <property type="evidence" value="ECO:0000316"/>
    <property type="project" value="MGI"/>
</dbReference>
<dbReference type="GO" id="GO:0071466">
    <property type="term" value="P:cellular response to xenobiotic stimulus"/>
    <property type="evidence" value="ECO:0000314"/>
    <property type="project" value="UniProtKB"/>
</dbReference>
<dbReference type="GO" id="GO:0070994">
    <property type="term" value="P:detection of oxidative stress"/>
    <property type="evidence" value="ECO:0000315"/>
    <property type="project" value="UniProtKB"/>
</dbReference>
<dbReference type="GO" id="GO:0006635">
    <property type="term" value="P:fatty acid beta-oxidation"/>
    <property type="evidence" value="ECO:0000315"/>
    <property type="project" value="MGI"/>
</dbReference>
<dbReference type="GO" id="GO:0019395">
    <property type="term" value="P:fatty acid oxidation"/>
    <property type="evidence" value="ECO:0000314"/>
    <property type="project" value="MGI"/>
</dbReference>
<dbReference type="GO" id="GO:0010467">
    <property type="term" value="P:gene expression"/>
    <property type="evidence" value="ECO:0000314"/>
    <property type="project" value="MGI"/>
</dbReference>
<dbReference type="GO" id="GO:0042593">
    <property type="term" value="P:glucose homeostasis"/>
    <property type="evidence" value="ECO:0000314"/>
    <property type="project" value="MGI"/>
</dbReference>
<dbReference type="GO" id="GO:0006006">
    <property type="term" value="P:glucose metabolic process"/>
    <property type="evidence" value="ECO:0000314"/>
    <property type="project" value="MGI"/>
</dbReference>
<dbReference type="GO" id="GO:0034383">
    <property type="term" value="P:low-density lipoprotein particle clearance"/>
    <property type="evidence" value="ECO:0000250"/>
    <property type="project" value="UniProtKB"/>
</dbReference>
<dbReference type="GO" id="GO:0045776">
    <property type="term" value="P:negative regulation of blood pressure"/>
    <property type="evidence" value="ECO:0000250"/>
    <property type="project" value="UniProtKB"/>
</dbReference>
<dbReference type="GO" id="GO:0043124">
    <property type="term" value="P:negative regulation of canonical NF-kappaB signal transduction"/>
    <property type="evidence" value="ECO:0000250"/>
    <property type="project" value="UniProtKB"/>
</dbReference>
<dbReference type="GO" id="GO:0030336">
    <property type="term" value="P:negative regulation of cell migration"/>
    <property type="evidence" value="ECO:0000314"/>
    <property type="project" value="UniProtKB"/>
</dbReference>
<dbReference type="GO" id="GO:0060621">
    <property type="term" value="P:negative regulation of cholesterol import"/>
    <property type="evidence" value="ECO:0007669"/>
    <property type="project" value="Ensembl"/>
</dbReference>
<dbReference type="GO" id="GO:0120163">
    <property type="term" value="P:negative regulation of cold-induced thermogenesis"/>
    <property type="evidence" value="ECO:0000315"/>
    <property type="project" value="YuBioLab"/>
</dbReference>
<dbReference type="GO" id="GO:2000279">
    <property type="term" value="P:negative regulation of DNA biosynthetic process"/>
    <property type="evidence" value="ECO:0000250"/>
    <property type="project" value="UniProtKB"/>
</dbReference>
<dbReference type="GO" id="GO:0045892">
    <property type="term" value="P:negative regulation of DNA-templated transcription"/>
    <property type="evidence" value="ECO:0000315"/>
    <property type="project" value="UniProtKB"/>
</dbReference>
<dbReference type="GO" id="GO:0070373">
    <property type="term" value="P:negative regulation of ERK1 and ERK2 cascade"/>
    <property type="evidence" value="ECO:0000250"/>
    <property type="project" value="UniProtKB"/>
</dbReference>
<dbReference type="GO" id="GO:0045599">
    <property type="term" value="P:negative regulation of fat cell differentiation"/>
    <property type="evidence" value="ECO:0000314"/>
    <property type="project" value="BHF-UCL"/>
</dbReference>
<dbReference type="GO" id="GO:0045721">
    <property type="term" value="P:negative regulation of gluconeogenesis"/>
    <property type="evidence" value="ECO:0000314"/>
    <property type="project" value="MGI"/>
</dbReference>
<dbReference type="GO" id="GO:0030853">
    <property type="term" value="P:negative regulation of granulocyte differentiation"/>
    <property type="evidence" value="ECO:0000250"/>
    <property type="project" value="UniProtKB"/>
</dbReference>
<dbReference type="GO" id="GO:0034115">
    <property type="term" value="P:negative regulation of heterotypic cell-cell adhesion"/>
    <property type="evidence" value="ECO:0000250"/>
    <property type="project" value="UniProtKB"/>
</dbReference>
<dbReference type="GO" id="GO:0050728">
    <property type="term" value="P:negative regulation of inflammatory response"/>
    <property type="evidence" value="ECO:0000314"/>
    <property type="project" value="UniProtKB"/>
</dbReference>
<dbReference type="GO" id="GO:0090317">
    <property type="term" value="P:negative regulation of intracellular protein transport"/>
    <property type="evidence" value="ECO:0000250"/>
    <property type="project" value="UniProtKB"/>
</dbReference>
<dbReference type="GO" id="GO:0010745">
    <property type="term" value="P:negative regulation of macrophage derived foam cell differentiation"/>
    <property type="evidence" value="ECO:0000250"/>
    <property type="project" value="UniProtKB"/>
</dbReference>
<dbReference type="GO" id="GO:0045650">
    <property type="term" value="P:negative regulation of macrophage differentiation"/>
    <property type="evidence" value="ECO:0000250"/>
    <property type="project" value="UniProtKB"/>
</dbReference>
<dbReference type="GO" id="GO:0043407">
    <property type="term" value="P:negative regulation of MAP kinase activity"/>
    <property type="evidence" value="ECO:0000314"/>
    <property type="project" value="UniProtKB"/>
</dbReference>
<dbReference type="GO" id="GO:2000590">
    <property type="term" value="P:negative regulation of metanephric mesenchymal cell migration"/>
    <property type="evidence" value="ECO:0000314"/>
    <property type="project" value="UniProtKB"/>
</dbReference>
<dbReference type="GO" id="GO:0050765">
    <property type="term" value="P:negative regulation of phagocytosis"/>
    <property type="evidence" value="ECO:0000250"/>
    <property type="project" value="UniProtKB"/>
</dbReference>
<dbReference type="GO" id="GO:0010642">
    <property type="term" value="P:negative regulation of platelet-derived growth factor receptor signaling pathway"/>
    <property type="evidence" value="ECO:0000314"/>
    <property type="project" value="UniProtKB"/>
</dbReference>
<dbReference type="GO" id="GO:2000584">
    <property type="term" value="P:negative regulation of platelet-derived growth factor receptor-alpha signaling pathway"/>
    <property type="evidence" value="ECO:0000314"/>
    <property type="project" value="UniProtKB"/>
</dbReference>
<dbReference type="GO" id="GO:0031953">
    <property type="term" value="P:negative regulation of protein autophosphorylation"/>
    <property type="evidence" value="ECO:0000250"/>
    <property type="project" value="UniProtKB"/>
</dbReference>
<dbReference type="GO" id="GO:1900121">
    <property type="term" value="P:negative regulation of receptor binding"/>
    <property type="evidence" value="ECO:0000250"/>
    <property type="project" value="UniProtKB"/>
</dbReference>
<dbReference type="GO" id="GO:0048261">
    <property type="term" value="P:negative regulation of receptor-mediated endocytosis"/>
    <property type="evidence" value="ECO:0007669"/>
    <property type="project" value="Ensembl"/>
</dbReference>
<dbReference type="GO" id="GO:0050805">
    <property type="term" value="P:negative regulation of synaptic transmission"/>
    <property type="evidence" value="ECO:0000250"/>
    <property type="project" value="UniProtKB"/>
</dbReference>
<dbReference type="GO" id="GO:0032720">
    <property type="term" value="P:negative regulation of tumor necrosis factor production"/>
    <property type="evidence" value="ECO:0000250"/>
    <property type="project" value="UniProtKB"/>
</dbReference>
<dbReference type="GO" id="GO:0010804">
    <property type="term" value="P:negative regulation of tumor necrosis factor-mediated signaling pathway"/>
    <property type="evidence" value="ECO:0000250"/>
    <property type="project" value="UniProtKB"/>
</dbReference>
<dbReference type="GO" id="GO:1904753">
    <property type="term" value="P:negative regulation of vascular associated smooth muscle cell migration"/>
    <property type="evidence" value="ECO:0000250"/>
    <property type="project" value="UniProtKB"/>
</dbReference>
<dbReference type="GO" id="GO:1904706">
    <property type="term" value="P:negative regulation of vascular associated smooth muscle cell proliferation"/>
    <property type="evidence" value="ECO:0000250"/>
    <property type="project" value="UniProtKB"/>
</dbReference>
<dbReference type="GO" id="GO:2000481">
    <property type="term" value="P:positive regulation of cAMP-dependent protein kinase activity"/>
    <property type="evidence" value="ECO:0000315"/>
    <property type="project" value="UniProtKB"/>
</dbReference>
<dbReference type="GO" id="GO:0141163">
    <property type="term" value="P:positive regulation of cAMP/PKA signal transduction"/>
    <property type="evidence" value="ECO:0000250"/>
    <property type="project" value="UniProtKB"/>
</dbReference>
<dbReference type="GO" id="GO:0043123">
    <property type="term" value="P:positive regulation of canonical NF-kappaB signal transduction"/>
    <property type="evidence" value="ECO:0000314"/>
    <property type="project" value="MGI"/>
</dbReference>
<dbReference type="GO" id="GO:0010875">
    <property type="term" value="P:positive regulation of cholesterol efflux"/>
    <property type="evidence" value="ECO:0000250"/>
    <property type="project" value="UniProtKB"/>
</dbReference>
<dbReference type="GO" id="GO:0120162">
    <property type="term" value="P:positive regulation of cold-induced thermogenesis"/>
    <property type="evidence" value="ECO:0000315"/>
    <property type="project" value="YuBioLab"/>
</dbReference>
<dbReference type="GO" id="GO:0046326">
    <property type="term" value="P:positive regulation of D-glucose import"/>
    <property type="evidence" value="ECO:0000314"/>
    <property type="project" value="MGI"/>
</dbReference>
<dbReference type="GO" id="GO:0045923">
    <property type="term" value="P:positive regulation of fatty acid metabolic process"/>
    <property type="evidence" value="ECO:0000315"/>
    <property type="project" value="MGI"/>
</dbReference>
<dbReference type="GO" id="GO:2000467">
    <property type="term" value="P:positive regulation of glycogen (starch) synthase activity"/>
    <property type="evidence" value="ECO:0000250"/>
    <property type="project" value="UniProtKB"/>
</dbReference>
<dbReference type="GO" id="GO:0032757">
    <property type="term" value="P:positive regulation of interleukin-8 production"/>
    <property type="evidence" value="ECO:0000250"/>
    <property type="project" value="UniProtKB"/>
</dbReference>
<dbReference type="GO" id="GO:2000478">
    <property type="term" value="P:positive regulation of metanephric podocyte development"/>
    <property type="evidence" value="ECO:0000315"/>
    <property type="project" value="UniProtKB"/>
</dbReference>
<dbReference type="GO" id="GO:0071639">
    <property type="term" value="P:positive regulation of monocyte chemotactic protein-1 production"/>
    <property type="evidence" value="ECO:0000250"/>
    <property type="project" value="UniProtKB"/>
</dbReference>
<dbReference type="GO" id="GO:0033034">
    <property type="term" value="P:positive regulation of myeloid cell apoptotic process"/>
    <property type="evidence" value="ECO:0000250"/>
    <property type="project" value="UniProtKB"/>
</dbReference>
<dbReference type="GO" id="GO:0001934">
    <property type="term" value="P:positive regulation of protein phosphorylation"/>
    <property type="evidence" value="ECO:0000250"/>
    <property type="project" value="UniProtKB"/>
</dbReference>
<dbReference type="GO" id="GO:2000534">
    <property type="term" value="P:positive regulation of renal albumin absorption"/>
    <property type="evidence" value="ECO:0000315"/>
    <property type="project" value="UniProtKB"/>
</dbReference>
<dbReference type="GO" id="GO:0009967">
    <property type="term" value="P:positive regulation of signal transduction"/>
    <property type="evidence" value="ECO:0000314"/>
    <property type="project" value="MGI"/>
</dbReference>
<dbReference type="GO" id="GO:0072659">
    <property type="term" value="P:protein localization to plasma membrane"/>
    <property type="evidence" value="ECO:0000250"/>
    <property type="project" value="UniProtKB"/>
</dbReference>
<dbReference type="GO" id="GO:0010906">
    <property type="term" value="P:regulation of glucose metabolic process"/>
    <property type="evidence" value="ECO:0000250"/>
    <property type="project" value="UniProtKB"/>
</dbReference>
<dbReference type="GO" id="GO:0009617">
    <property type="term" value="P:response to bacterium"/>
    <property type="evidence" value="ECO:0000270"/>
    <property type="project" value="MGI"/>
</dbReference>
<dbReference type="GO" id="GO:0009749">
    <property type="term" value="P:response to glucose"/>
    <property type="evidence" value="ECO:0000314"/>
    <property type="project" value="MGI"/>
</dbReference>
<dbReference type="GO" id="GO:0034612">
    <property type="term" value="P:response to tumor necrosis factor"/>
    <property type="evidence" value="ECO:0000250"/>
    <property type="project" value="UniProtKB"/>
</dbReference>
<dbReference type="FunFam" id="2.60.120.40:FF:000001">
    <property type="entry name" value="Complement C1q B chain"/>
    <property type="match status" value="1"/>
</dbReference>
<dbReference type="Gene3D" id="2.60.120.40">
    <property type="match status" value="1"/>
</dbReference>
<dbReference type="InterPro" id="IPR001073">
    <property type="entry name" value="C1q_dom"/>
</dbReference>
<dbReference type="InterPro" id="IPR008160">
    <property type="entry name" value="Collagen"/>
</dbReference>
<dbReference type="InterPro" id="IPR050392">
    <property type="entry name" value="Collagen/C1q_domain"/>
</dbReference>
<dbReference type="InterPro" id="IPR008983">
    <property type="entry name" value="Tumour_necrosis_fac-like_dom"/>
</dbReference>
<dbReference type="PANTHER" id="PTHR15427:SF20">
    <property type="entry name" value="ADIPONECTIN"/>
    <property type="match status" value="1"/>
</dbReference>
<dbReference type="PANTHER" id="PTHR15427">
    <property type="entry name" value="EMILIN ELASTIN MICROFIBRIL INTERFACE-LOCATED PROTEIN ELASTIN MICROFIBRIL INTERFACER"/>
    <property type="match status" value="1"/>
</dbReference>
<dbReference type="Pfam" id="PF00386">
    <property type="entry name" value="C1q"/>
    <property type="match status" value="1"/>
</dbReference>
<dbReference type="Pfam" id="PF01391">
    <property type="entry name" value="Collagen"/>
    <property type="match status" value="1"/>
</dbReference>
<dbReference type="PRINTS" id="PR00007">
    <property type="entry name" value="COMPLEMNTC1Q"/>
</dbReference>
<dbReference type="SMART" id="SM00110">
    <property type="entry name" value="C1Q"/>
    <property type="match status" value="1"/>
</dbReference>
<dbReference type="SUPFAM" id="SSF49842">
    <property type="entry name" value="TNF-like"/>
    <property type="match status" value="1"/>
</dbReference>
<dbReference type="PROSITE" id="PS50871">
    <property type="entry name" value="C1Q"/>
    <property type="match status" value="1"/>
</dbReference>
<keyword id="KW-0002">3D-structure</keyword>
<keyword id="KW-0176">Collagen</keyword>
<keyword id="KW-0903">Direct protein sequencing</keyword>
<keyword id="KW-1015">Disulfide bond</keyword>
<keyword id="KW-0325">Glycoprotein</keyword>
<keyword id="KW-0372">Hormone</keyword>
<keyword id="KW-0379">Hydroxylation</keyword>
<keyword id="KW-1185">Reference proteome</keyword>
<keyword id="KW-0677">Repeat</keyword>
<keyword id="KW-0964">Secreted</keyword>
<keyword id="KW-0732">Signal</keyword>
<comment type="function">
    <text evidence="5 6 8 9 10">Important adipokine involved in the control of fat metabolism and insulin sensitivity, with direct anti-diabetic, anti-atherogenic and anti-inflammatory activities. Stimulates AMPK phosphorylation and activation in the liver and the skeletal muscle, enhancing glucose utilization and fatty-acid combustion. Antagonizes TNF-alpha by negatively regulating its expression in various tissues such as liver and macrophages, and also by counteracting its effects. Inhibits endothelial NF-kappa-B signaling through a cAMP-dependent pathway. May play a role in cell growth, angiogenesis and tissue remodeling by binding and sequestering various growth factors with distinct binding affinities, depending on the type of complex, LMW, MMW or HMW.</text>
</comment>
<comment type="activity regulation">
    <text evidence="13">Polymerization and secretion of adiponectin is inhibited by succination of cysteine residues by the Krebs cycle intermediate fumarate, which leads to S-(2-succinyl)cysteine residues.</text>
</comment>
<comment type="subunit">
    <text evidence="9 10 11 12 14 15">Homomultimer (PubMed:23209641). Forms trimers, hexamers and 12- to 18-mers. The trimers (low molecular weight complexes / LMW) are assembled via non-covalent interactions of the collagen-like domains in a triple helix and hydrophobic interactions within the globular C1q domain. Several trimers can associate to form disulfide-linked hexamers (middle molecular weight complexes / MMW) and larger complexes (higher molecular weight / HMW) (PubMed:23209641). The HMW-complex assembly is also modulated by the degree of lysine hydroxylation and glycosylation (PubMed:23209641). LMW, MMW and HMW complexes bind to HBEGF, MMW and HMW complexes bind to PDGFB, and HMW complex binds to FGF2. Interacts with CTRP9 via the C1q domain (heterotrimeric complex) (PubMed:18787108).</text>
</comment>
<comment type="interaction">
    <interactant intactId="EBI-7264589">
        <id>Q60994</id>
    </interactant>
    <interactant intactId="EBI-7264589">
        <id>Q60994</id>
        <label>Adipoq</label>
    </interactant>
    <organismsDiffer>false</organismsDiffer>
    <experiments>17</experiments>
</comment>
<comment type="interaction">
    <interactant intactId="EBI-7264589">
        <id>Q60994</id>
    </interactant>
    <interactant intactId="EBI-8369416">
        <id>Q9DCM2</id>
        <label>Gstk1</label>
    </interactant>
    <organismsDiffer>false</organismsDiffer>
    <experiments>3</experiments>
</comment>
<comment type="interaction">
    <interactant intactId="EBI-7264589">
        <id>Q60994</id>
    </interactant>
    <interactant intactId="EBI-1053767">
        <id>Q9Y2Q3</id>
        <label>GSTK1</label>
    </interactant>
    <organismsDiffer>true</organismsDiffer>
    <experiments>2</experiments>
</comment>
<comment type="subcellular location">
    <subcellularLocation>
        <location evidence="15">Secreted</location>
    </subcellularLocation>
</comment>
<comment type="tissue specificity">
    <text>Synthesized exclusively by adipocytes and secreted into plasma.</text>
</comment>
<comment type="induction">
    <text>During hormone-induced adipose differentiation and activated by insulin.</text>
</comment>
<comment type="PTM">
    <text evidence="7 15">HMW complexes are more extensively glycosylated than smaller oligomers. Hydroxylation and glycosylation of the lysine residues within the collagen-like domain of adiponectin seem to be critically involved in regulating the formation and/or secretion of HMW complexes and consequently contribute to the insulin-sensitizing activity of adiponectin in hepatocytes.</text>
</comment>
<comment type="PTM">
    <text evidence="1">O-glycosylated. Not N-glycosylated (By similarity) O-linked glycans on hydroxylysine residues consist of Glc-Gal disaccharides bound to the oxygen atom of post-translationally added hydroxyl groups (By similarity). O-linked glycosylation in the N-terminal is disialylated with the structure Neu5Acalpha2-&gt;8Neu5Acalpha2-&gt;3Gal. Sialylated by alpha 2,8-sialyltransferase III.</text>
</comment>
<comment type="PTM">
    <text evidence="13">Succination of Cys-39 by the Krebs cycle intermediate fumarate, which leads to S-(2-succinyl)cysteine residues, inhibits polymerization and secretion of adiponectin. Adiponectin is a major target for succination in both adipocytes and adipose tissue of diabetic mice. It was proposed that succination of proteins is a biomarker of mitochondrial stress and accumulation of Krebs cycle intermediates in adipose tissue in diabetes and that succination of adiponectin may contribute to the decrease in plasma adiponectin in diabetes.</text>
</comment>
<comment type="miscellaneous">
    <text>HMW-complex blood contents are higher in females than in males, are increased in males by castration and decreased again upon subsequent testosterone treatment, which blocks HMW-complex secretion.</text>
</comment>
<protein>
    <recommendedName>
        <fullName>Adiponectin</fullName>
    </recommendedName>
    <alternativeName>
        <fullName>30 kDa adipocyte complement-related protein</fullName>
    </alternativeName>
    <alternativeName>
        <fullName>Adipocyte complement-related 30 kDa protein</fullName>
        <shortName>ACRP30</shortName>
    </alternativeName>
    <alternativeName>
        <fullName>Adipocyte, C1q and collagen domain-containing protein</fullName>
    </alternativeName>
    <alternativeName>
        <fullName>Adipocyte-specific protein AdipoQ</fullName>
    </alternativeName>
</protein>
<organism>
    <name type="scientific">Mus musculus</name>
    <name type="common">Mouse</name>
    <dbReference type="NCBI Taxonomy" id="10090"/>
    <lineage>
        <taxon>Eukaryota</taxon>
        <taxon>Metazoa</taxon>
        <taxon>Chordata</taxon>
        <taxon>Craniata</taxon>
        <taxon>Vertebrata</taxon>
        <taxon>Euteleostomi</taxon>
        <taxon>Mammalia</taxon>
        <taxon>Eutheria</taxon>
        <taxon>Euarchontoglires</taxon>
        <taxon>Glires</taxon>
        <taxon>Rodentia</taxon>
        <taxon>Myomorpha</taxon>
        <taxon>Muroidea</taxon>
        <taxon>Muridae</taxon>
        <taxon>Murinae</taxon>
        <taxon>Mus</taxon>
        <taxon>Mus</taxon>
    </lineage>
</organism>
<sequence length="247" mass="26809">MLLLQALLFLLILPSHAEDDVTTTEELAPALVPPPKGTCAGWMAGIPGHPGHNGTPGRDGRDGTPGEKGEKGDAGLLGPKGETGDVGMTGAEGPRGFPGTPGRKGEPGEAAYVYRSAFSVGLETRVTVPNVPIRFTKIFYNQQNHYDGSTGKFYCNIPGLYYFSYHITVYMKDVKVSLFKKDKAVLFTYDQYQEKNVDQASGSVLLHLEVGDQVWLQVYGDGDHNGLYADNVNDSTFTGFLLYHDTN</sequence>
<proteinExistence type="evidence at protein level"/>
<gene>
    <name type="primary">Adipoq</name>
    <name type="synonym">Acdc</name>
    <name type="synonym">Acrp30</name>
    <name type="synonym">Apm1</name>
</gene>
<accession>Q60994</accession>
<accession>Q62400</accession>
<accession>Q6GTX4</accession>
<accession>Q9DC68</accession>
<reference key="1">
    <citation type="journal article" date="1995" name="J. Biol. Chem.">
        <title>A novel serum protein similar to C1q, produced exclusively in adipocytes.</title>
        <authorList>
            <person name="Scherer P.E."/>
            <person name="Williams S."/>
            <person name="Fogliano M."/>
            <person name="Baldini G."/>
            <person name="Lodish H.F."/>
        </authorList>
    </citation>
    <scope>NUCLEOTIDE SEQUENCE [MRNA]</scope>
    <source>
        <tissue>Adipocyte</tissue>
    </source>
</reference>
<reference key="2">
    <citation type="journal article" date="1996" name="J. Biol. Chem.">
        <title>AdipoQ is a novel adipose-specific gene dysregulated in obesity.</title>
        <authorList>
            <person name="Hu E."/>
            <person name="Liang P."/>
            <person name="Spiegelman B.M."/>
        </authorList>
    </citation>
    <scope>NUCLEOTIDE SEQUENCE [MRNA]</scope>
    <source>
        <tissue>Fibroblast</tissue>
    </source>
</reference>
<reference key="3">
    <citation type="journal article" date="2001" name="Biochem. Biophys. Res. Commun.">
        <title>Chromosomal localization, expression pattern, and promoter analysis of the mouse gene encoding adipocyte-specific secretory protein Acrp30.</title>
        <authorList>
            <person name="Das K."/>
            <person name="Lin Y."/>
            <person name="Widen E."/>
            <person name="Zhang Y."/>
            <person name="Scherer P.E."/>
        </authorList>
    </citation>
    <scope>NUCLEOTIDE SEQUENCE [GENOMIC DNA]</scope>
</reference>
<reference key="4">
    <citation type="submission" date="2004-09" db="EMBL/GenBank/DDBJ databases">
        <title>Cloning of murine adipocyte complement-related protein of 30 KDa from white adipose tissue.</title>
        <authorList>
            <person name="Wang S.F."/>
            <person name="Han P.Z."/>
            <person name="Mu C.J."/>
            <person name="Zhao M.H."/>
        </authorList>
    </citation>
    <scope>NUCLEOTIDE SEQUENCE [MRNA]</scope>
    <source>
        <strain>C57BL/6J</strain>
        <strain>IRM-2</strain>
        <tissue>White adipose tissue</tissue>
    </source>
</reference>
<reference key="5">
    <citation type="journal article" date="2005" name="Science">
        <title>The transcriptional landscape of the mammalian genome.</title>
        <authorList>
            <person name="Carninci P."/>
            <person name="Kasukawa T."/>
            <person name="Katayama S."/>
            <person name="Gough J."/>
            <person name="Frith M.C."/>
            <person name="Maeda N."/>
            <person name="Oyama R."/>
            <person name="Ravasi T."/>
            <person name="Lenhard B."/>
            <person name="Wells C."/>
            <person name="Kodzius R."/>
            <person name="Shimokawa K."/>
            <person name="Bajic V.B."/>
            <person name="Brenner S.E."/>
            <person name="Batalov S."/>
            <person name="Forrest A.R."/>
            <person name="Zavolan M."/>
            <person name="Davis M.J."/>
            <person name="Wilming L.G."/>
            <person name="Aidinis V."/>
            <person name="Allen J.E."/>
            <person name="Ambesi-Impiombato A."/>
            <person name="Apweiler R."/>
            <person name="Aturaliya R.N."/>
            <person name="Bailey T.L."/>
            <person name="Bansal M."/>
            <person name="Baxter L."/>
            <person name="Beisel K.W."/>
            <person name="Bersano T."/>
            <person name="Bono H."/>
            <person name="Chalk A.M."/>
            <person name="Chiu K.P."/>
            <person name="Choudhary V."/>
            <person name="Christoffels A."/>
            <person name="Clutterbuck D.R."/>
            <person name="Crowe M.L."/>
            <person name="Dalla E."/>
            <person name="Dalrymple B.P."/>
            <person name="de Bono B."/>
            <person name="Della Gatta G."/>
            <person name="di Bernardo D."/>
            <person name="Down T."/>
            <person name="Engstrom P."/>
            <person name="Fagiolini M."/>
            <person name="Faulkner G."/>
            <person name="Fletcher C.F."/>
            <person name="Fukushima T."/>
            <person name="Furuno M."/>
            <person name="Futaki S."/>
            <person name="Gariboldi M."/>
            <person name="Georgii-Hemming P."/>
            <person name="Gingeras T.R."/>
            <person name="Gojobori T."/>
            <person name="Green R.E."/>
            <person name="Gustincich S."/>
            <person name="Harbers M."/>
            <person name="Hayashi Y."/>
            <person name="Hensch T.K."/>
            <person name="Hirokawa N."/>
            <person name="Hill D."/>
            <person name="Huminiecki L."/>
            <person name="Iacono M."/>
            <person name="Ikeo K."/>
            <person name="Iwama A."/>
            <person name="Ishikawa T."/>
            <person name="Jakt M."/>
            <person name="Kanapin A."/>
            <person name="Katoh M."/>
            <person name="Kawasawa Y."/>
            <person name="Kelso J."/>
            <person name="Kitamura H."/>
            <person name="Kitano H."/>
            <person name="Kollias G."/>
            <person name="Krishnan S.P."/>
            <person name="Kruger A."/>
            <person name="Kummerfeld S.K."/>
            <person name="Kurochkin I.V."/>
            <person name="Lareau L.F."/>
            <person name="Lazarevic D."/>
            <person name="Lipovich L."/>
            <person name="Liu J."/>
            <person name="Liuni S."/>
            <person name="McWilliam S."/>
            <person name="Madan Babu M."/>
            <person name="Madera M."/>
            <person name="Marchionni L."/>
            <person name="Matsuda H."/>
            <person name="Matsuzawa S."/>
            <person name="Miki H."/>
            <person name="Mignone F."/>
            <person name="Miyake S."/>
            <person name="Morris K."/>
            <person name="Mottagui-Tabar S."/>
            <person name="Mulder N."/>
            <person name="Nakano N."/>
            <person name="Nakauchi H."/>
            <person name="Ng P."/>
            <person name="Nilsson R."/>
            <person name="Nishiguchi S."/>
            <person name="Nishikawa S."/>
            <person name="Nori F."/>
            <person name="Ohara O."/>
            <person name="Okazaki Y."/>
            <person name="Orlando V."/>
            <person name="Pang K.C."/>
            <person name="Pavan W.J."/>
            <person name="Pavesi G."/>
            <person name="Pesole G."/>
            <person name="Petrovsky N."/>
            <person name="Piazza S."/>
            <person name="Reed J."/>
            <person name="Reid J.F."/>
            <person name="Ring B.Z."/>
            <person name="Ringwald M."/>
            <person name="Rost B."/>
            <person name="Ruan Y."/>
            <person name="Salzberg S.L."/>
            <person name="Sandelin A."/>
            <person name="Schneider C."/>
            <person name="Schoenbach C."/>
            <person name="Sekiguchi K."/>
            <person name="Semple C.A."/>
            <person name="Seno S."/>
            <person name="Sessa L."/>
            <person name="Sheng Y."/>
            <person name="Shibata Y."/>
            <person name="Shimada H."/>
            <person name="Shimada K."/>
            <person name="Silva D."/>
            <person name="Sinclair B."/>
            <person name="Sperling S."/>
            <person name="Stupka E."/>
            <person name="Sugiura K."/>
            <person name="Sultana R."/>
            <person name="Takenaka Y."/>
            <person name="Taki K."/>
            <person name="Tammoja K."/>
            <person name="Tan S.L."/>
            <person name="Tang S."/>
            <person name="Taylor M.S."/>
            <person name="Tegner J."/>
            <person name="Teichmann S.A."/>
            <person name="Ueda H.R."/>
            <person name="van Nimwegen E."/>
            <person name="Verardo R."/>
            <person name="Wei C.L."/>
            <person name="Yagi K."/>
            <person name="Yamanishi H."/>
            <person name="Zabarovsky E."/>
            <person name="Zhu S."/>
            <person name="Zimmer A."/>
            <person name="Hide W."/>
            <person name="Bult C."/>
            <person name="Grimmond S.M."/>
            <person name="Teasdale R.D."/>
            <person name="Liu E.T."/>
            <person name="Brusic V."/>
            <person name="Quackenbush J."/>
            <person name="Wahlestedt C."/>
            <person name="Mattick J.S."/>
            <person name="Hume D.A."/>
            <person name="Kai C."/>
            <person name="Sasaki D."/>
            <person name="Tomaru Y."/>
            <person name="Fukuda S."/>
            <person name="Kanamori-Katayama M."/>
            <person name="Suzuki M."/>
            <person name="Aoki J."/>
            <person name="Arakawa T."/>
            <person name="Iida J."/>
            <person name="Imamura K."/>
            <person name="Itoh M."/>
            <person name="Kato T."/>
            <person name="Kawaji H."/>
            <person name="Kawagashira N."/>
            <person name="Kawashima T."/>
            <person name="Kojima M."/>
            <person name="Kondo S."/>
            <person name="Konno H."/>
            <person name="Nakano K."/>
            <person name="Ninomiya N."/>
            <person name="Nishio T."/>
            <person name="Okada M."/>
            <person name="Plessy C."/>
            <person name="Shibata K."/>
            <person name="Shiraki T."/>
            <person name="Suzuki S."/>
            <person name="Tagami M."/>
            <person name="Waki K."/>
            <person name="Watahiki A."/>
            <person name="Okamura-Oho Y."/>
            <person name="Suzuki H."/>
            <person name="Kawai J."/>
            <person name="Hayashizaki Y."/>
        </authorList>
    </citation>
    <scope>NUCLEOTIDE SEQUENCE [LARGE SCALE MRNA]</scope>
    <source>
        <strain>C57BL/6J</strain>
        <tissue>Heart</tissue>
        <tissue>Thymus</tissue>
    </source>
</reference>
<reference key="6">
    <citation type="journal article" date="2009" name="PLoS Biol.">
        <title>Lineage-specific biology revealed by a finished genome assembly of the mouse.</title>
        <authorList>
            <person name="Church D.M."/>
            <person name="Goodstadt L."/>
            <person name="Hillier L.W."/>
            <person name="Zody M.C."/>
            <person name="Goldstein S."/>
            <person name="She X."/>
            <person name="Bult C.J."/>
            <person name="Agarwala R."/>
            <person name="Cherry J.L."/>
            <person name="DiCuccio M."/>
            <person name="Hlavina W."/>
            <person name="Kapustin Y."/>
            <person name="Meric P."/>
            <person name="Maglott D."/>
            <person name="Birtle Z."/>
            <person name="Marques A.C."/>
            <person name="Graves T."/>
            <person name="Zhou S."/>
            <person name="Teague B."/>
            <person name="Potamousis K."/>
            <person name="Churas C."/>
            <person name="Place M."/>
            <person name="Herschleb J."/>
            <person name="Runnheim R."/>
            <person name="Forrest D."/>
            <person name="Amos-Landgraf J."/>
            <person name="Schwartz D.C."/>
            <person name="Cheng Z."/>
            <person name="Lindblad-Toh K."/>
            <person name="Eichler E.E."/>
            <person name="Ponting C.P."/>
        </authorList>
    </citation>
    <scope>NUCLEOTIDE SEQUENCE [LARGE SCALE GENOMIC DNA]</scope>
    <source>
        <strain>C57BL/6J</strain>
    </source>
</reference>
<reference key="7">
    <citation type="submission" date="2005-07" db="EMBL/GenBank/DDBJ databases">
        <authorList>
            <person name="Mural R.J."/>
            <person name="Adams M.D."/>
            <person name="Myers E.W."/>
            <person name="Smith H.O."/>
            <person name="Venter J.C."/>
        </authorList>
    </citation>
    <scope>NUCLEOTIDE SEQUENCE [LARGE SCALE GENOMIC DNA]</scope>
</reference>
<reference key="8">
    <citation type="journal article" date="2004" name="Genome Res.">
        <title>The status, quality, and expansion of the NIH full-length cDNA project: the Mammalian Gene Collection (MGC).</title>
        <authorList>
            <consortium name="The MGC Project Team"/>
        </authorList>
    </citation>
    <scope>NUCLEOTIDE SEQUENCE [LARGE SCALE MRNA]</scope>
    <source>
        <strain>C57BL/6J</strain>
        <tissue>Thymus</tissue>
    </source>
</reference>
<reference key="9">
    <citation type="journal article" date="2002" name="J. Biol. Chem.">
        <title>Hydroxylation and glycosylation of the four conserved lysine residues in the collagenous domain of adiponectin. Potential role in the modulation of its insulin-sensitizing activity.</title>
        <authorList>
            <person name="Wang Y."/>
            <person name="Xu A."/>
            <person name="Knight C."/>
            <person name="Xu L.Y."/>
            <person name="Cooper G.J.S."/>
        </authorList>
    </citation>
    <scope>PROTEIN SEQUENCE OF 18-25</scope>
    <scope>HYDROXYLATION AT LYS-68; LYS-71; LYS-80; PRO-94 AND LYS-104</scope>
    <scope>GLYCOSYLATION AT LYS-68; LYS-71; LYS-80 AND LYS-104</scope>
    <scope>GLYCAN STRUCTURE</scope>
    <scope>LACK OF HYDROXYLATION AT PRO-79; PRO-98 AND PRO-107</scope>
    <scope>LACK OF GLYCOSYLATION AT ASN-233</scope>
    <scope>IDENTIFICATION BY MASS SPECTROMETRY</scope>
</reference>
<reference key="10">
    <citation type="journal article" date="2001" name="J. Biol. Chem.">
        <title>Identification and adipocyte differentiation-dependent expression of the unique disialic acid residue in an adipose tissue-specific glycoprotein, adipo Q.</title>
        <authorList>
            <person name="Sato C."/>
            <person name="Yasukawa Z."/>
            <person name="Honda N."/>
            <person name="Matsuda T."/>
            <person name="Kitajima K."/>
        </authorList>
    </citation>
    <scope>STRUCTURE OF CARBOHYDRATES</scope>
</reference>
<reference key="11">
    <citation type="journal article" date="2001" name="Nat. Med.">
        <title>The fat-derived hormone adiponectin reverses insulin resistance associated with both lipoatrophy and obesity.</title>
        <authorList>
            <person name="Yamauchi T."/>
            <person name="Kamon J."/>
            <person name="Waki H."/>
            <person name="Terauchi Y."/>
            <person name="Kubota N."/>
            <person name="Hara K."/>
            <person name="Mori Y."/>
            <person name="Ide T."/>
            <person name="Murakami K."/>
            <person name="Tsuboyama-Kasaoka N."/>
            <person name="Ezaki O."/>
            <person name="Akanuma Y."/>
            <person name="Gavrilova O."/>
            <person name="Vinson C."/>
            <person name="Reitman M.L."/>
            <person name="Kagechika H."/>
            <person name="Shudo K."/>
            <person name="Yoda M."/>
            <person name="Nakano Y."/>
            <person name="Tobe K."/>
            <person name="Nagai R."/>
            <person name="Kimura S."/>
            <person name="Tomita M."/>
            <person name="Froguel P."/>
            <person name="Kadowaki T."/>
        </authorList>
    </citation>
    <scope>FUNCTION</scope>
</reference>
<reference key="12">
    <citation type="journal article" date="2001" name="Nat. Med.">
        <title>The adipocyte-secreted protein Acrp30 enhances hepatic insulin action.</title>
        <authorList>
            <person name="Berg A.H."/>
            <person name="Combs T.P."/>
            <person name="Du X."/>
            <person name="Brownlee M."/>
            <person name="Scherer P.E."/>
        </authorList>
    </citation>
    <scope>FUNCTION</scope>
</reference>
<reference key="13">
    <citation type="journal article" date="2003" name="J. Clin. Invest.">
        <title>The fat-derived hormone adiponectin alleviates alcoholic and nonalcoholic fatty liver diseases in mice.</title>
        <authorList>
            <person name="Xu A."/>
            <person name="Wang Y."/>
            <person name="Keshaw H."/>
            <person name="Xu L.Y."/>
            <person name="Lam K.S.L."/>
            <person name="Cooper G.J.S."/>
        </authorList>
    </citation>
    <scope>FUNCTION</scope>
</reference>
<reference key="14">
    <citation type="journal article" date="2005" name="J. Biol. Chem.">
        <title>Testosterone selectively reduces the high molecular weight form of adiponectin by inhibiting its secretion from adipocytes.</title>
        <authorList>
            <person name="Xu A."/>
            <person name="Chan K.W."/>
            <person name="Hoo R.L.C."/>
            <person name="Wang Y."/>
            <person name="Tan K.C.B."/>
            <person name="Zhang J."/>
            <person name="Chen B."/>
            <person name="Lam M.C."/>
            <person name="Tse C."/>
            <person name="Cooper G.J.S."/>
            <person name="Lam K.S.L."/>
        </authorList>
    </citation>
    <scope>SUBUNIT</scope>
    <scope>FUNCTION</scope>
</reference>
<reference key="15">
    <citation type="journal article" date="2005" name="J. Biol. Chem.">
        <title>Adiponectin inhibits cell proliferation by interacting with several growth factors in an oligomerization-dependent manner.</title>
        <authorList>
            <person name="Wang Y."/>
            <person name="Lam K.S.L."/>
            <person name="Xu J.Y."/>
            <person name="Lu G."/>
            <person name="Xu L.Y."/>
            <person name="Cooper G.J.S."/>
            <person name="Xu A."/>
        </authorList>
    </citation>
    <scope>SUBUNIT</scope>
    <scope>FUNCTION</scope>
</reference>
<reference key="16">
    <citation type="journal article" date="2006" name="J. Biol. Chem.">
        <title>Post-translational modifications of the four conserved lysine residues within the collagenous domain of adiponectin are required for the formation of its high molecular weight oligomeric complex.</title>
        <authorList>
            <person name="Wang Y."/>
            <person name="Lam K.S.L."/>
            <person name="Chan L."/>
            <person name="Chan K.W."/>
            <person name="Lam J.B.B."/>
            <person name="Lam M.C."/>
            <person name="Hoo R.C.L."/>
            <person name="Mak W.W.N."/>
            <person name="Cooper G.J.S."/>
            <person name="Xu A."/>
        </authorList>
    </citation>
    <scope>SUBUNIT</scope>
    <scope>MUTAGENESIS OF LYS-68; LYS-71; LYS-80 AND LYS-104</scope>
</reference>
<reference key="17">
    <citation type="journal article" date="2009" name="FASEB J.">
        <title>Identification and characterization of CTRP9, a novel secreted glycoprotein, from adipose tissue that reduces serum glucose in mice and forms heterotrimers with adiponectin.</title>
        <authorList>
            <person name="Wong G.W."/>
            <person name="Krawczyk S.A."/>
            <person name="Kitidis-Mitrokostas C."/>
            <person name="Ge G."/>
            <person name="Spooner E."/>
            <person name="Hug C."/>
            <person name="Gimeno R."/>
            <person name="Lodish H.F."/>
        </authorList>
    </citation>
    <scope>SUBUNIT</scope>
    <scope>INTERACTION WITH CTRP9</scope>
    <scope>MUTAGENESIS OF CYS-39</scope>
</reference>
<reference key="18">
    <citation type="journal article" date="2009" name="J. Biol. Chem.">
        <title>Succination of thiol groups in adipose tissue proteins in diabetes: succination inhibits polymerization and secretion of adiponectin.</title>
        <authorList>
            <person name="Frizzell N."/>
            <person name="Rajesh M."/>
            <person name="Jepson M.J."/>
            <person name="Nagai R."/>
            <person name="Carson J.A."/>
            <person name="Thorpe S.R."/>
            <person name="Baynes J.W."/>
        </authorList>
    </citation>
    <scope>SUCCINATION AT CYS-39</scope>
    <scope>ACTIVITY REGULATION</scope>
</reference>
<reference key="19">
    <citation type="journal article" date="2010" name="Cell">
        <title>A tissue-specific atlas of mouse protein phosphorylation and expression.</title>
        <authorList>
            <person name="Huttlin E.L."/>
            <person name="Jedrychowski M.P."/>
            <person name="Elias J.E."/>
            <person name="Goswami T."/>
            <person name="Rad R."/>
            <person name="Beausoleil S.A."/>
            <person name="Villen J."/>
            <person name="Haas W."/>
            <person name="Sowa M.E."/>
            <person name="Gygi S.P."/>
        </authorList>
    </citation>
    <scope>IDENTIFICATION BY MASS SPECTROMETRY [LARGE SCALE ANALYSIS]</scope>
    <source>
        <tissue>Brown adipose tissue</tissue>
        <tissue>Heart</tissue>
        <tissue>Lung</tissue>
    </source>
</reference>
<reference key="20">
    <citation type="journal article" date="2010" name="Mol. Endocrinol.">
        <title>Sialic acid modification of adiponectin is not required for multimerization or secretion but determines half-life in circulation.</title>
        <authorList>
            <person name="Richards A.A."/>
            <person name="Colgrave M.L."/>
            <person name="Zhang J."/>
            <person name="Webster J."/>
            <person name="Simpson F."/>
            <person name="Preston E."/>
            <person name="Wilks D."/>
            <person name="Hoehn K.L."/>
            <person name="Stephenson M."/>
            <person name="Macdonald G.A."/>
            <person name="Prins J.B."/>
            <person name="Cooney G.J."/>
            <person name="Xu A."/>
            <person name="Whitehead J.P."/>
        </authorList>
    </citation>
    <scope>GLYCOSYLATION AT THR-23 AND THR-24</scope>
    <scope>SUBUNIT</scope>
</reference>
<reference key="21">
    <citation type="journal article" date="2012" name="PLoS ONE">
        <title>The activities of lysyl hydroxylase 3 (LH3) regulate the amount and oligomerization status of adiponectin.</title>
        <authorList>
            <person name="Ruotsalainen H."/>
            <person name="Risteli M."/>
            <person name="Wang C."/>
            <person name="Wang Y."/>
            <person name="Karppinen M."/>
            <person name="Bergmann U."/>
            <person name="Kvist A.P."/>
            <person name="Pospiech H."/>
            <person name="Herzig K.H."/>
            <person name="Myllylae R."/>
        </authorList>
    </citation>
    <scope>SUBUNIT</scope>
    <scope>SUBCELLULAR LOCATION</scope>
    <scope>HYDROXYLATION AT LYS-68; LYS-71; LYS-80 AND LYS-104</scope>
    <scope>GLYCOSYLATION AT LYS-68; LYS-71; LYS-80 AND LYS-104</scope>
    <scope>IDENTIFICATION BY MASS SPECTROMETRY</scope>
</reference>
<reference key="22">
    <citation type="journal article" date="1998" name="Curr. Biol.">
        <title>The crystal structure of a complement-1q family protein suggests an evolutionary link to tumor necrosis factor.</title>
        <authorList>
            <person name="Shapiro L."/>
            <person name="Scherer P.E."/>
        </authorList>
    </citation>
    <scope>X-RAY CRYSTALLOGRAPHY (2.1 ANGSTROMS) OF 111-247</scope>
</reference>
<evidence type="ECO:0000250" key="1"/>
<evidence type="ECO:0000250" key="2">
    <source>
        <dbReference type="UniProtKB" id="Q3Y5Z3"/>
    </source>
</evidence>
<evidence type="ECO:0000255" key="3">
    <source>
        <dbReference type="PROSITE-ProRule" id="PRU00368"/>
    </source>
</evidence>
<evidence type="ECO:0000256" key="4">
    <source>
        <dbReference type="SAM" id="MobiDB-lite"/>
    </source>
</evidence>
<evidence type="ECO:0000269" key="5">
    <source>
    </source>
</evidence>
<evidence type="ECO:0000269" key="6">
    <source>
    </source>
</evidence>
<evidence type="ECO:0000269" key="7">
    <source>
    </source>
</evidence>
<evidence type="ECO:0000269" key="8">
    <source>
    </source>
</evidence>
<evidence type="ECO:0000269" key="9">
    <source>
    </source>
</evidence>
<evidence type="ECO:0000269" key="10">
    <source>
    </source>
</evidence>
<evidence type="ECO:0000269" key="11">
    <source>
    </source>
</evidence>
<evidence type="ECO:0000269" key="12">
    <source>
    </source>
</evidence>
<evidence type="ECO:0000269" key="13">
    <source>
    </source>
</evidence>
<evidence type="ECO:0000269" key="14">
    <source>
    </source>
</evidence>
<evidence type="ECO:0000269" key="15">
    <source>
    </source>
</evidence>
<evidence type="ECO:0000305" key="16"/>
<evidence type="ECO:0000305" key="17">
    <source>
    </source>
</evidence>
<evidence type="ECO:0007829" key="18">
    <source>
        <dbReference type="PDB" id="1C28"/>
    </source>
</evidence>
<evidence type="ECO:0007829" key="19">
    <source>
        <dbReference type="PDB" id="1C3H"/>
    </source>
</evidence>
<feature type="signal peptide" evidence="7">
    <location>
        <begin position="1"/>
        <end position="17"/>
    </location>
</feature>
<feature type="chain" id="PRO_0000003544" description="Adiponectin">
    <location>
        <begin position="18"/>
        <end position="247"/>
    </location>
</feature>
<feature type="domain" description="Collagen-like">
    <location>
        <begin position="45"/>
        <end position="110"/>
    </location>
</feature>
<feature type="domain" description="C1q" evidence="3">
    <location>
        <begin position="111"/>
        <end position="247"/>
    </location>
</feature>
<feature type="region of interest" description="Disordered" evidence="4">
    <location>
        <begin position="44"/>
        <end position="105"/>
    </location>
</feature>
<feature type="compositionally biased region" description="Basic and acidic residues" evidence="4">
    <location>
        <begin position="58"/>
        <end position="73"/>
    </location>
</feature>
<feature type="site" description="Not hydroxylated" evidence="7">
    <location>
        <position position="79"/>
    </location>
</feature>
<feature type="site" description="Not hydroxylated" evidence="7">
    <location>
        <position position="98"/>
    </location>
</feature>
<feature type="site" description="Not hydroxylated" evidence="7">
    <location>
        <position position="107"/>
    </location>
</feature>
<feature type="site" description="Not glycosylated" evidence="7">
    <location>
        <position position="233"/>
    </location>
</feature>
<feature type="modified residue" description="5-hydroxylysine" evidence="2">
    <location>
        <position position="36"/>
    </location>
</feature>
<feature type="modified residue" description="S-(2-succinyl)cysteine" evidence="13">
    <location>
        <position position="39"/>
    </location>
</feature>
<feature type="modified residue" description="4-hydroxyproline" evidence="1">
    <location>
        <position position="47"/>
    </location>
</feature>
<feature type="modified residue" description="4-hydroxyproline" evidence="1">
    <location>
        <position position="50"/>
    </location>
</feature>
<feature type="modified residue" description="4-hydroxyproline" evidence="1">
    <location>
        <position position="56"/>
    </location>
</feature>
<feature type="modified residue" description="5-hydroxylysine; alternate" evidence="7 15">
    <location>
        <position position="68"/>
    </location>
</feature>
<feature type="modified residue" description="5-hydroxylysine; alternate" evidence="7 15">
    <location>
        <position position="71"/>
    </location>
</feature>
<feature type="modified residue" description="5-hydroxylysine; alternate" evidence="7 15">
    <location>
        <position position="80"/>
    </location>
</feature>
<feature type="modified residue" description="4-hydroxyproline" evidence="7">
    <location>
        <position position="94"/>
    </location>
</feature>
<feature type="modified residue" description="5-hydroxylysine; alternate" evidence="7 15">
    <location>
        <position position="104"/>
    </location>
</feature>
<feature type="glycosylation site" description="O-linked (GalNAc...) threonine" evidence="17">
    <location>
        <position position="23"/>
    </location>
</feature>
<feature type="glycosylation site" description="O-linked (GalNAc...) threonine" evidence="17">
    <location>
        <position position="24"/>
    </location>
</feature>
<feature type="glycosylation site" description="O-linked (Gal...) hydroxylysine; alternate" evidence="7 15">
    <location>
        <position position="68"/>
    </location>
</feature>
<feature type="glycosylation site" description="O-linked (Gal...) hydroxylysine; alternate" evidence="7 15">
    <location>
        <position position="71"/>
    </location>
</feature>
<feature type="glycosylation site" description="O-linked (Gal...) hydroxylysine; alternate" evidence="7 15">
    <location>
        <position position="80"/>
    </location>
</feature>
<feature type="glycosylation site" description="O-linked (Gal...) hydroxylysine; alternate" evidence="7 15">
    <location>
        <position position="104"/>
    </location>
</feature>
<feature type="disulfide bond" description="Interchain" evidence="1">
    <location>
        <position position="39"/>
    </location>
</feature>
<feature type="mutagenesis site" description="No change in the interaction with CTRP9." evidence="12">
    <original>C</original>
    <variation>A</variation>
    <location>
        <position position="39"/>
    </location>
</feature>
<feature type="mutagenesis site" description="Impaired formation of HMW multimers; when associated with R-71; R-80 and R-104." evidence="11">
    <original>K</original>
    <variation>R</variation>
    <location>
        <position position="68"/>
    </location>
</feature>
<feature type="mutagenesis site" description="Impaired formation of HMW multimers; when associated with R-68; R-80 and R-104." evidence="11">
    <original>K</original>
    <variation>R</variation>
    <location>
        <position position="71"/>
    </location>
</feature>
<feature type="mutagenesis site" description="Impaired formation of HMW multimers; when associated with R-68; R-71 and R-104." evidence="11">
    <original>K</original>
    <variation>R</variation>
    <location>
        <position position="80"/>
    </location>
</feature>
<feature type="mutagenesis site" description="Impaired formation of HMW multimers; when associated with R-68; R-71 and R-80." evidence="11">
    <original>K</original>
    <variation>R</variation>
    <location>
        <position position="104"/>
    </location>
</feature>
<feature type="sequence conflict" description="In Ref. 2; AAB06706." evidence="16" ref="2">
    <original>P</original>
    <variation>S</variation>
    <location>
        <position position="50"/>
    </location>
</feature>
<feature type="sequence conflict" description="In Ref. 2; AAB06706." evidence="16" ref="2">
    <original>A</original>
    <variation>S</variation>
    <location>
        <position position="74"/>
    </location>
</feature>
<feature type="sequence conflict" description="In Ref. 1; AAA80543 and 3; AAK13417." evidence="16" ref="1 3">
    <original>V</original>
    <variation>M</variation>
    <location>
        <position position="113"/>
    </location>
</feature>
<feature type="sequence conflict" description="In Ref. 2; AAB06706." evidence="16" ref="2">
    <original>A</original>
    <variation>G</variation>
    <location>
        <position position="117"/>
    </location>
</feature>
<feature type="sequence conflict" description="In Ref. 2; AAB06706." evidence="16" ref="2">
    <original>G</original>
    <variation>N</variation>
    <location>
        <position position="148"/>
    </location>
</feature>
<feature type="sequence conflict" description="In Ref. 2; AAB06706." evidence="16" ref="2">
    <original>Y</original>
    <variation>F</variation>
    <location>
        <position position="243"/>
    </location>
</feature>
<feature type="strand" evidence="18">
    <location>
        <begin position="117"/>
        <end position="121"/>
    </location>
</feature>
<feature type="strand" evidence="19">
    <location>
        <begin position="130"/>
        <end position="132"/>
    </location>
</feature>
<feature type="strand" evidence="18">
    <location>
        <begin position="137"/>
        <end position="140"/>
    </location>
</feature>
<feature type="turn" evidence="18">
    <location>
        <begin position="148"/>
        <end position="150"/>
    </location>
</feature>
<feature type="strand" evidence="19">
    <location>
        <begin position="152"/>
        <end position="154"/>
    </location>
</feature>
<feature type="strand" evidence="18">
    <location>
        <begin position="159"/>
        <end position="172"/>
    </location>
</feature>
<feature type="strand" evidence="18">
    <location>
        <begin position="174"/>
        <end position="180"/>
    </location>
</feature>
<feature type="strand" evidence="18">
    <location>
        <begin position="183"/>
        <end position="190"/>
    </location>
</feature>
<feature type="strand" evidence="18">
    <location>
        <begin position="197"/>
        <end position="208"/>
    </location>
</feature>
<feature type="strand" evidence="18">
    <location>
        <begin position="213"/>
        <end position="218"/>
    </location>
</feature>
<feature type="strand" evidence="18">
    <location>
        <begin position="236"/>
        <end position="244"/>
    </location>
</feature>